<protein>
    <recommendedName>
        <fullName>Nitrogen permease regulator 3</fullName>
    </recommendedName>
    <alternativeName>
        <fullName>Required for meiotic nuclear division protein 11</fullName>
    </alternativeName>
</protein>
<accession>A5E0E7</accession>
<comment type="function">
    <text evidence="1">Mediates inactivation of the TORC1 complex in response to amino acid starvation. Required for meiotic nuclear division (By similarity).</text>
</comment>
<comment type="similarity">
    <text evidence="4">Belongs to the NPR3 family.</text>
</comment>
<name>NPR3_LODEL</name>
<evidence type="ECO:0000250" key="1"/>
<evidence type="ECO:0000255" key="2"/>
<evidence type="ECO:0000256" key="3">
    <source>
        <dbReference type="SAM" id="MobiDB-lite"/>
    </source>
</evidence>
<evidence type="ECO:0000305" key="4"/>
<dbReference type="EMBL" id="CH981527">
    <property type="protein sequence ID" value="EDK44905.1"/>
    <property type="molecule type" value="Genomic_DNA"/>
</dbReference>
<dbReference type="RefSeq" id="XP_001525156.1">
    <property type="nucleotide sequence ID" value="XM_001525106.1"/>
</dbReference>
<dbReference type="SMR" id="A5E0E7"/>
<dbReference type="FunCoup" id="A5E0E7">
    <property type="interactions" value="97"/>
</dbReference>
<dbReference type="STRING" id="379508.A5E0E7"/>
<dbReference type="GeneID" id="5232414"/>
<dbReference type="KEGG" id="lel:PVL30_002577"/>
<dbReference type="VEuPathDB" id="FungiDB:LELG_03084"/>
<dbReference type="eggNOG" id="ENOG502QW35">
    <property type="taxonomic scope" value="Eukaryota"/>
</dbReference>
<dbReference type="HOGENOM" id="CLU_014314_0_0_1"/>
<dbReference type="InParanoid" id="A5E0E7"/>
<dbReference type="OMA" id="CNLAFRY"/>
<dbReference type="OrthoDB" id="18648at2759"/>
<dbReference type="Proteomes" id="UP000001996">
    <property type="component" value="Unassembled WGS sequence"/>
</dbReference>
<dbReference type="GO" id="GO:1990130">
    <property type="term" value="C:GATOR1 complex"/>
    <property type="evidence" value="ECO:0007669"/>
    <property type="project" value="TreeGrafter"/>
</dbReference>
<dbReference type="GO" id="GO:0034198">
    <property type="term" value="P:cellular response to amino acid starvation"/>
    <property type="evidence" value="ECO:0007669"/>
    <property type="project" value="TreeGrafter"/>
</dbReference>
<dbReference type="GO" id="GO:0051321">
    <property type="term" value="P:meiotic cell cycle"/>
    <property type="evidence" value="ECO:0007669"/>
    <property type="project" value="UniProtKB-KW"/>
</dbReference>
<dbReference type="GO" id="GO:1904262">
    <property type="term" value="P:negative regulation of TORC1 signaling"/>
    <property type="evidence" value="ECO:0007669"/>
    <property type="project" value="TreeGrafter"/>
</dbReference>
<dbReference type="GO" id="GO:0010508">
    <property type="term" value="P:positive regulation of autophagy"/>
    <property type="evidence" value="ECO:0007669"/>
    <property type="project" value="TreeGrafter"/>
</dbReference>
<dbReference type="GO" id="GO:0038202">
    <property type="term" value="P:TORC1 signaling"/>
    <property type="evidence" value="ECO:0007669"/>
    <property type="project" value="TreeGrafter"/>
</dbReference>
<dbReference type="InterPro" id="IPR056603">
    <property type="entry name" value="HTH_NPRL3"/>
</dbReference>
<dbReference type="InterPro" id="IPR005365">
    <property type="entry name" value="Npr3"/>
</dbReference>
<dbReference type="PANTHER" id="PTHR13153">
    <property type="entry name" value="CGTHBA PROTEIN -14 GENE PROTEIN"/>
    <property type="match status" value="1"/>
</dbReference>
<dbReference type="PANTHER" id="PTHR13153:SF5">
    <property type="entry name" value="GATOR COMPLEX PROTEIN NPRL3"/>
    <property type="match status" value="1"/>
</dbReference>
<dbReference type="Pfam" id="PF24064">
    <property type="entry name" value="HTH_NPRL3"/>
    <property type="match status" value="1"/>
</dbReference>
<dbReference type="Pfam" id="PF03666">
    <property type="entry name" value="NPR3"/>
    <property type="match status" value="2"/>
</dbReference>
<proteinExistence type="inferred from homology"/>
<organism>
    <name type="scientific">Lodderomyces elongisporus (strain ATCC 11503 / CBS 2605 / JCM 1781 / NBRC 1676 / NRRL YB-4239)</name>
    <name type="common">Yeast</name>
    <name type="synonym">Saccharomyces elongisporus</name>
    <dbReference type="NCBI Taxonomy" id="379508"/>
    <lineage>
        <taxon>Eukaryota</taxon>
        <taxon>Fungi</taxon>
        <taxon>Dikarya</taxon>
        <taxon>Ascomycota</taxon>
        <taxon>Saccharomycotina</taxon>
        <taxon>Pichiomycetes</taxon>
        <taxon>Debaryomycetaceae</taxon>
        <taxon>Candida/Lodderomyces clade</taxon>
        <taxon>Lodderomyces</taxon>
    </lineage>
</organism>
<feature type="signal peptide" evidence="2">
    <location>
        <begin position="1"/>
        <end position="21"/>
    </location>
</feature>
<feature type="chain" id="PRO_0000301802" description="Nitrogen permease regulator 3">
    <location>
        <begin position="22"/>
        <end position="828"/>
    </location>
</feature>
<feature type="region of interest" description="Disordered" evidence="3">
    <location>
        <begin position="49"/>
        <end position="87"/>
    </location>
</feature>
<feature type="region of interest" description="Disordered" evidence="3">
    <location>
        <begin position="127"/>
        <end position="207"/>
    </location>
</feature>
<feature type="region of interest" description="Disordered" evidence="3">
    <location>
        <begin position="644"/>
        <end position="688"/>
    </location>
</feature>
<feature type="compositionally biased region" description="Basic and acidic residues" evidence="3">
    <location>
        <begin position="49"/>
        <end position="59"/>
    </location>
</feature>
<feature type="compositionally biased region" description="Acidic residues" evidence="3">
    <location>
        <begin position="60"/>
        <end position="79"/>
    </location>
</feature>
<feature type="compositionally biased region" description="Basic residues" evidence="3">
    <location>
        <begin position="127"/>
        <end position="136"/>
    </location>
</feature>
<feature type="compositionally biased region" description="Basic and acidic residues" evidence="3">
    <location>
        <begin position="139"/>
        <end position="151"/>
    </location>
</feature>
<feature type="compositionally biased region" description="Basic and acidic residues" evidence="3">
    <location>
        <begin position="169"/>
        <end position="203"/>
    </location>
</feature>
<feature type="compositionally biased region" description="Polar residues" evidence="3">
    <location>
        <begin position="645"/>
        <end position="668"/>
    </location>
</feature>
<feature type="compositionally biased region" description="Polar residues" evidence="3">
    <location>
        <begin position="675"/>
        <end position="684"/>
    </location>
</feature>
<sequence>MSRNLPNPSLVGILFVVSTHSGPQLLYKYPHNLTDRVFSLVPRKHAGTEDGMQHLVRDDKDDDDDDELYEYNEDEDPESGDLLFFDKDGTSRDRSGINVISDTNHSQYYYGTKLELKRTLDEGRALRRATPHKYNHNRLSTEHPKRNEHSQGSKSRRSIRNTDTTQDDNYQKQKGQQEGREKKDKDKEKEKEKDAEEKGDVSEPHSAVDTFSIADDIFGMAPGYLCEILSPPRQMCNTRYEVTIQDKIFLGLPIHQHADGTWTNARSSKRSQSGRSNSLHFENLTSSTEAQLASTTAQSLTMFHLVFIMNPPATECSYRIDEMFQHVASRTSLGLRLAQQKHNYVGNQMKAIQRAREQECKEVDLDKTLSLCKLIKECYLAISTSRIANLEIDGKQVVCQIPTKYEFDSLPEPSVPYIPRSFLSSSIHSFGMWDRSNIEQQKLDDDFLQESIMCFALLLLAEPHNILQDMNIVTNSPFGKFIMLLHPSESLLKFCSKNSQHFEPSEVKSYALHLIYWKKARAIQPLSSRSVYVASPMASLTTKLFEDIYRFKARFPMSPSLPQFLKLLSPQLKKPQQFASIIPSRDHRASYFEALAWLIRFGYVNQQLTFVWLKIPKNLRVKVEEDMENEDALLKRNKDRVFGEKSQTTDNTSKTMAVQESPHNNDITTTRDTKISNNRNNGSDFDTDADANVNVNSDANTSTNAAVANTAAGLVDARKDSLINATTETTESQTERLKKQLTLSVVDDEDTIILEPGRASTLERRWINEIISVCKLSHDLIAIFYKLLKFMNGKTPLEFLIIKNEISRLDLKKLLYAIGNYIVSVRHW</sequence>
<gene>
    <name type="primary">NPR3</name>
    <name type="synonym">RMD11</name>
    <name type="ORF">LELG_03084</name>
</gene>
<reference key="1">
    <citation type="journal article" date="2009" name="Nature">
        <title>Evolution of pathogenicity and sexual reproduction in eight Candida genomes.</title>
        <authorList>
            <person name="Butler G."/>
            <person name="Rasmussen M.D."/>
            <person name="Lin M.F."/>
            <person name="Santos M.A.S."/>
            <person name="Sakthikumar S."/>
            <person name="Munro C.A."/>
            <person name="Rheinbay E."/>
            <person name="Grabherr M."/>
            <person name="Forche A."/>
            <person name="Reedy J.L."/>
            <person name="Agrafioti I."/>
            <person name="Arnaud M.B."/>
            <person name="Bates S."/>
            <person name="Brown A.J.P."/>
            <person name="Brunke S."/>
            <person name="Costanzo M.C."/>
            <person name="Fitzpatrick D.A."/>
            <person name="de Groot P.W.J."/>
            <person name="Harris D."/>
            <person name="Hoyer L.L."/>
            <person name="Hube B."/>
            <person name="Klis F.M."/>
            <person name="Kodira C."/>
            <person name="Lennard N."/>
            <person name="Logue M.E."/>
            <person name="Martin R."/>
            <person name="Neiman A.M."/>
            <person name="Nikolaou E."/>
            <person name="Quail M.A."/>
            <person name="Quinn J."/>
            <person name="Santos M.C."/>
            <person name="Schmitzberger F.F."/>
            <person name="Sherlock G."/>
            <person name="Shah P."/>
            <person name="Silverstein K.A.T."/>
            <person name="Skrzypek M.S."/>
            <person name="Soll D."/>
            <person name="Staggs R."/>
            <person name="Stansfield I."/>
            <person name="Stumpf M.P.H."/>
            <person name="Sudbery P.E."/>
            <person name="Srikantha T."/>
            <person name="Zeng Q."/>
            <person name="Berman J."/>
            <person name="Berriman M."/>
            <person name="Heitman J."/>
            <person name="Gow N.A.R."/>
            <person name="Lorenz M.C."/>
            <person name="Birren B.W."/>
            <person name="Kellis M."/>
            <person name="Cuomo C.A."/>
        </authorList>
    </citation>
    <scope>NUCLEOTIDE SEQUENCE [LARGE SCALE GENOMIC DNA]</scope>
    <source>
        <strain>ATCC 11503 / BCRC 21390 / CBS 2605 / JCM 1781 / NBRC 1676 / NRRL YB-4239</strain>
    </source>
</reference>
<keyword id="KW-0469">Meiosis</keyword>
<keyword id="KW-1185">Reference proteome</keyword>
<keyword id="KW-0732">Signal</keyword>